<comment type="function">
    <text>May act as a protease inhibitor to modulate the host immune response against tumor cells.</text>
</comment>
<comment type="interaction">
    <interactant intactId="EBI-1055490">
        <id>P48594</id>
    </interactant>
    <interactant intactId="EBI-12690664">
        <id>P28358</id>
        <label>HOXD10</label>
    </interactant>
    <organismsDiffer>false</organismsDiffer>
    <experiments>2</experiments>
</comment>
<comment type="interaction">
    <interactant intactId="EBI-1055490">
        <id>P48594</id>
    </interactant>
    <interactant intactId="EBI-3910835">
        <id>Q14116</id>
        <label>IL18</label>
    </interactant>
    <organismsDiffer>false</organismsDiffer>
    <experiments>2</experiments>
</comment>
<comment type="interaction">
    <interactant intactId="EBI-1055490">
        <id>P48594</id>
    </interactant>
    <interactant intactId="EBI-359110">
        <id>P29508</id>
        <label>SERPINB3</label>
    </interactant>
    <organismsDiffer>false</organismsDiffer>
    <experiments>5</experiments>
</comment>
<comment type="subcellular location">
    <subcellularLocation>
        <location evidence="1">Cytoplasm</location>
    </subcellularLocation>
    <text>Seems to also be secreted in plasma by cancerous cells but at a low level.</text>
</comment>
<comment type="tissue specificity">
    <text>Squamous cells.</text>
</comment>
<comment type="similarity">
    <text evidence="3">Belongs to the serpin family. Ov-serpin subfamily.</text>
</comment>
<gene>
    <name type="primary">SERPINB4</name>
    <name type="synonym">PI11</name>
    <name type="synonym">SCCA2</name>
</gene>
<name>SPB4_HUMAN</name>
<evidence type="ECO:0000269" key="1">
    <source>
    </source>
</evidence>
<evidence type="ECO:0000269" key="2">
    <source ref="6"/>
</evidence>
<evidence type="ECO:0000305" key="3"/>
<keyword id="KW-0007">Acetylation</keyword>
<keyword id="KW-0963">Cytoplasm</keyword>
<keyword id="KW-0903">Direct protein sequencing</keyword>
<keyword id="KW-0646">Protease inhibitor</keyword>
<keyword id="KW-1267">Proteomics identification</keyword>
<keyword id="KW-1185">Reference proteome</keyword>
<keyword id="KW-0722">Serine protease inhibitor</keyword>
<protein>
    <recommendedName>
        <fullName>Serpin B4</fullName>
    </recommendedName>
    <alternativeName>
        <fullName>Leupin</fullName>
    </alternativeName>
    <alternativeName>
        <fullName>Peptidase inhibitor 11</fullName>
        <shortName>PI-11</shortName>
    </alternativeName>
    <alternativeName>
        <fullName>Squamous cell carcinoma antigen 2</fullName>
        <shortName>SCCA-2</shortName>
    </alternativeName>
</protein>
<accession>P48594</accession>
<accession>A8K847</accession>
<feature type="chain" id="PRO_0000094104" description="Serpin B4">
    <location>
        <begin position="1"/>
        <end position="390"/>
    </location>
</feature>
<feature type="site" description="Reactive bond">
    <location>
        <begin position="354"/>
        <end position="355"/>
    </location>
</feature>
<feature type="modified residue" description="N-acetylmethionine" evidence="2">
    <location>
        <position position="1"/>
    </location>
</feature>
<feature type="sequence conflict" description="In Ref. 4; BAF84901." evidence="3" ref="4">
    <original>E</original>
    <variation>K</variation>
    <location>
        <position position="353"/>
    </location>
</feature>
<organism>
    <name type="scientific">Homo sapiens</name>
    <name type="common">Human</name>
    <dbReference type="NCBI Taxonomy" id="9606"/>
    <lineage>
        <taxon>Eukaryota</taxon>
        <taxon>Metazoa</taxon>
        <taxon>Chordata</taxon>
        <taxon>Craniata</taxon>
        <taxon>Vertebrata</taxon>
        <taxon>Euteleostomi</taxon>
        <taxon>Mammalia</taxon>
        <taxon>Eutheria</taxon>
        <taxon>Euarchontoglires</taxon>
        <taxon>Primates</taxon>
        <taxon>Haplorrhini</taxon>
        <taxon>Catarrhini</taxon>
        <taxon>Hominidae</taxon>
        <taxon>Homo</taxon>
    </lineage>
</organism>
<dbReference type="EMBL" id="X89015">
    <property type="protein sequence ID" value="CAA61420.1"/>
    <property type="molecule type" value="mRNA"/>
</dbReference>
<dbReference type="EMBL" id="U19557">
    <property type="protein sequence ID" value="AAA97553.1"/>
    <property type="molecule type" value="mRNA"/>
</dbReference>
<dbReference type="EMBL" id="U19576">
    <property type="protein sequence ID" value="AAA92602.1"/>
    <property type="molecule type" value="Genomic_DNA"/>
</dbReference>
<dbReference type="EMBL" id="U19570">
    <property type="protein sequence ID" value="AAA92602.1"/>
    <property type="status" value="JOINED"/>
    <property type="molecule type" value="Genomic_DNA"/>
</dbReference>
<dbReference type="EMBL" id="U19571">
    <property type="protein sequence ID" value="AAA92602.1"/>
    <property type="status" value="JOINED"/>
    <property type="molecule type" value="Genomic_DNA"/>
</dbReference>
<dbReference type="EMBL" id="U19572">
    <property type="protein sequence ID" value="AAA92602.1"/>
    <property type="status" value="JOINED"/>
    <property type="molecule type" value="Genomic_DNA"/>
</dbReference>
<dbReference type="EMBL" id="U19574">
    <property type="protein sequence ID" value="AAA92602.1"/>
    <property type="status" value="JOINED"/>
    <property type="molecule type" value="Genomic_DNA"/>
</dbReference>
<dbReference type="EMBL" id="U19575">
    <property type="protein sequence ID" value="AAA92602.1"/>
    <property type="status" value="JOINED"/>
    <property type="molecule type" value="Genomic_DNA"/>
</dbReference>
<dbReference type="EMBL" id="AB035089">
    <property type="protein sequence ID" value="BAB21525.1"/>
    <property type="molecule type" value="Genomic_DNA"/>
</dbReference>
<dbReference type="EMBL" id="AK292212">
    <property type="protein sequence ID" value="BAF84901.1"/>
    <property type="molecule type" value="mRNA"/>
</dbReference>
<dbReference type="EMBL" id="BC017401">
    <property type="protein sequence ID" value="AAH17401.1"/>
    <property type="molecule type" value="mRNA"/>
</dbReference>
<dbReference type="CCDS" id="CCDS11986.1"/>
<dbReference type="PIR" id="I38202">
    <property type="entry name" value="I38202"/>
</dbReference>
<dbReference type="RefSeq" id="NP_002965.1">
    <property type="nucleotide sequence ID" value="NM_002974.4"/>
</dbReference>
<dbReference type="RefSeq" id="NP_778206.1">
    <property type="nucleotide sequence ID" value="NM_175041.1"/>
</dbReference>
<dbReference type="RefSeq" id="XP_011524440.1">
    <property type="nucleotide sequence ID" value="XM_011526138.2"/>
</dbReference>
<dbReference type="RefSeq" id="XP_054174943.1">
    <property type="nucleotide sequence ID" value="XM_054318968.1"/>
</dbReference>
<dbReference type="SMR" id="P48594"/>
<dbReference type="BioGRID" id="112224">
    <property type="interactions" value="235"/>
</dbReference>
<dbReference type="FunCoup" id="P48594">
    <property type="interactions" value="732"/>
</dbReference>
<dbReference type="IntAct" id="P48594">
    <property type="interactions" value="175"/>
</dbReference>
<dbReference type="MINT" id="P48594"/>
<dbReference type="STRING" id="9606.ENSP00000343445"/>
<dbReference type="MEROPS" id="I04.008"/>
<dbReference type="MEROPS" id="I04.009"/>
<dbReference type="GlyGen" id="P48594">
    <property type="glycosylation" value="1 site, 1 O-linked glycan (1 site)"/>
</dbReference>
<dbReference type="iPTMnet" id="P48594"/>
<dbReference type="PhosphoSitePlus" id="P48594"/>
<dbReference type="SwissPalm" id="P48594"/>
<dbReference type="BioMuta" id="SERPINB4"/>
<dbReference type="DMDM" id="1710877"/>
<dbReference type="jPOST" id="P48594"/>
<dbReference type="MassIVE" id="P48594"/>
<dbReference type="PaxDb" id="9606-ENSP00000343445"/>
<dbReference type="PeptideAtlas" id="P48594"/>
<dbReference type="PRIDE" id="P48594"/>
<dbReference type="ProteomicsDB" id="55911"/>
<dbReference type="Antibodypedia" id="53439">
    <property type="antibodies" value="450 antibodies from 27 providers"/>
</dbReference>
<dbReference type="DNASU" id="6318"/>
<dbReference type="Ensembl" id="ENST00000341074.10">
    <property type="protein sequence ID" value="ENSP00000343445.5"/>
    <property type="gene ID" value="ENSG00000206073.11"/>
</dbReference>
<dbReference type="GeneID" id="6318"/>
<dbReference type="KEGG" id="hsa:6318"/>
<dbReference type="MANE-Select" id="ENST00000341074.10">
    <property type="protein sequence ID" value="ENSP00000343445.5"/>
    <property type="RefSeq nucleotide sequence ID" value="NM_002974.4"/>
    <property type="RefSeq protein sequence ID" value="NP_002965.1"/>
</dbReference>
<dbReference type="UCSC" id="uc002ljf.4">
    <property type="organism name" value="human"/>
</dbReference>
<dbReference type="AGR" id="HGNC:10570"/>
<dbReference type="CTD" id="6318"/>
<dbReference type="DisGeNET" id="6318"/>
<dbReference type="GeneCards" id="SERPINB4"/>
<dbReference type="HGNC" id="HGNC:10570">
    <property type="gene designation" value="SERPINB4"/>
</dbReference>
<dbReference type="HPA" id="ENSG00000206073">
    <property type="expression patterns" value="Group enriched (cervix, esophagus, vagina)"/>
</dbReference>
<dbReference type="MalaCards" id="SERPINB4"/>
<dbReference type="MIM" id="600518">
    <property type="type" value="gene"/>
</dbReference>
<dbReference type="neXtProt" id="NX_P48594"/>
<dbReference type="OpenTargets" id="ENSG00000206073"/>
<dbReference type="PharmGKB" id="PA35539"/>
<dbReference type="VEuPathDB" id="HostDB:ENSG00000206073"/>
<dbReference type="eggNOG" id="KOG2392">
    <property type="taxonomic scope" value="Eukaryota"/>
</dbReference>
<dbReference type="GeneTree" id="ENSGT00940000154520"/>
<dbReference type="InParanoid" id="P48594"/>
<dbReference type="OMA" id="NKNTHKS"/>
<dbReference type="OrthoDB" id="671595at2759"/>
<dbReference type="PAN-GO" id="P48594">
    <property type="GO annotations" value="3 GO annotations based on evolutionary models"/>
</dbReference>
<dbReference type="PhylomeDB" id="P48594"/>
<dbReference type="TreeFam" id="TF352619"/>
<dbReference type="PathwayCommons" id="P48594"/>
<dbReference type="SignaLink" id="P48594"/>
<dbReference type="BioGRID-ORCS" id="6318">
    <property type="hits" value="13 hits in 1114 CRISPR screens"/>
</dbReference>
<dbReference type="ChiTaRS" id="SERPINB4">
    <property type="organism name" value="human"/>
</dbReference>
<dbReference type="GeneWiki" id="SERPINB4"/>
<dbReference type="GenomeRNAi" id="6318"/>
<dbReference type="Pharos" id="P48594">
    <property type="development level" value="Tbio"/>
</dbReference>
<dbReference type="PRO" id="PR:P48594"/>
<dbReference type="Proteomes" id="UP000005640">
    <property type="component" value="Chromosome 18"/>
</dbReference>
<dbReference type="RNAct" id="P48594">
    <property type="molecule type" value="protein"/>
</dbReference>
<dbReference type="Bgee" id="ENSG00000206073">
    <property type="expression patterns" value="Expressed in nasal cavity epithelium and 105 other cell types or tissues"/>
</dbReference>
<dbReference type="ExpressionAtlas" id="P48594">
    <property type="expression patterns" value="baseline and differential"/>
</dbReference>
<dbReference type="GO" id="GO:0005829">
    <property type="term" value="C:cytosol"/>
    <property type="evidence" value="ECO:0000314"/>
    <property type="project" value="HPA"/>
</dbReference>
<dbReference type="GO" id="GO:0005615">
    <property type="term" value="C:extracellular space"/>
    <property type="evidence" value="ECO:0000318"/>
    <property type="project" value="GO_Central"/>
</dbReference>
<dbReference type="GO" id="GO:0005886">
    <property type="term" value="C:plasma membrane"/>
    <property type="evidence" value="ECO:0000314"/>
    <property type="project" value="HPA"/>
</dbReference>
<dbReference type="GO" id="GO:0019899">
    <property type="term" value="F:enzyme binding"/>
    <property type="evidence" value="ECO:0000353"/>
    <property type="project" value="UniProtKB"/>
</dbReference>
<dbReference type="GO" id="GO:0002020">
    <property type="term" value="F:protease binding"/>
    <property type="evidence" value="ECO:0000353"/>
    <property type="project" value="UniProtKB"/>
</dbReference>
<dbReference type="GO" id="GO:0004867">
    <property type="term" value="F:serine-type endopeptidase inhibitor activity"/>
    <property type="evidence" value="ECO:0000314"/>
    <property type="project" value="UniProtKB"/>
</dbReference>
<dbReference type="GO" id="GO:0010466">
    <property type="term" value="P:negative regulation of peptidase activity"/>
    <property type="evidence" value="ECO:0000314"/>
    <property type="project" value="UniProtKB"/>
</dbReference>
<dbReference type="GO" id="GO:0042270">
    <property type="term" value="P:protection from natural killer cell mediated cytotoxicity"/>
    <property type="evidence" value="ECO:0000315"/>
    <property type="project" value="UniProtKB"/>
</dbReference>
<dbReference type="GO" id="GO:0030162">
    <property type="term" value="P:regulation of proteolysis"/>
    <property type="evidence" value="ECO:0000303"/>
    <property type="project" value="UniProtKB"/>
</dbReference>
<dbReference type="CDD" id="cd19563">
    <property type="entry name" value="serpinB3_B4_SCCA1_2"/>
    <property type="match status" value="1"/>
</dbReference>
<dbReference type="FunFam" id="2.30.39.10:FF:000071">
    <property type="entry name" value="Serpin B3"/>
    <property type="match status" value="1"/>
</dbReference>
<dbReference type="FunFam" id="2.10.310.10:FF:000001">
    <property type="entry name" value="Serpin family A member 1"/>
    <property type="match status" value="1"/>
</dbReference>
<dbReference type="FunFam" id="3.30.497.10:FF:000004">
    <property type="entry name" value="Serpin family B member 1"/>
    <property type="match status" value="1"/>
</dbReference>
<dbReference type="Gene3D" id="2.30.39.10">
    <property type="entry name" value="Alpha-1-antitrypsin, domain 1"/>
    <property type="match status" value="1"/>
</dbReference>
<dbReference type="Gene3D" id="3.30.497.10">
    <property type="entry name" value="Antithrombin, subunit I, domain 2"/>
    <property type="match status" value="1"/>
</dbReference>
<dbReference type="InterPro" id="IPR023795">
    <property type="entry name" value="Serpin_CS"/>
</dbReference>
<dbReference type="InterPro" id="IPR023796">
    <property type="entry name" value="Serpin_dom"/>
</dbReference>
<dbReference type="InterPro" id="IPR000215">
    <property type="entry name" value="Serpin_fam"/>
</dbReference>
<dbReference type="InterPro" id="IPR036186">
    <property type="entry name" value="Serpin_sf"/>
</dbReference>
<dbReference type="InterPro" id="IPR042178">
    <property type="entry name" value="Serpin_sf_1"/>
</dbReference>
<dbReference type="InterPro" id="IPR042185">
    <property type="entry name" value="Serpin_sf_2"/>
</dbReference>
<dbReference type="PANTHER" id="PTHR11461">
    <property type="entry name" value="SERINE PROTEASE INHIBITOR, SERPIN"/>
    <property type="match status" value="1"/>
</dbReference>
<dbReference type="PANTHER" id="PTHR11461:SF186">
    <property type="entry name" value="SERPIN B4"/>
    <property type="match status" value="1"/>
</dbReference>
<dbReference type="Pfam" id="PF00079">
    <property type="entry name" value="Serpin"/>
    <property type="match status" value="1"/>
</dbReference>
<dbReference type="SMART" id="SM00093">
    <property type="entry name" value="SERPIN"/>
    <property type="match status" value="1"/>
</dbReference>
<dbReference type="SUPFAM" id="SSF56574">
    <property type="entry name" value="Serpins"/>
    <property type="match status" value="1"/>
</dbReference>
<dbReference type="PROSITE" id="PS00284">
    <property type="entry name" value="SERPIN"/>
    <property type="match status" value="1"/>
</dbReference>
<sequence length="390" mass="44854">MNSLSEANTKFMFDLFQQFRKSKENNIFYSPISITSALGMVLLGAKDNTAQQISKVLHFDQVTENTTEKAATYHVDRSGNVHHQFQKLLTEFNKSTDAYELKIANKLFGEKTYQFLQEYLDAIKKFYQTSVESTDFANAPEESRKKINSWVESQTNEKIKNLFPDGTIGNDTTLVLVNAIYFKGQWENKFKKENTKEEKFWPNKNTYKSVQMMRQYNSFNFALLEDVQAKVLEIPYKGKDLSMIVLLPNEIDGLQKLEEKLTAEKLMEWTSLQNMRETCVDLHLPRFKMEESYDLKDTLRTMGMVNIFNGDADLSGMTWSHGLSVSKVLHKAFVEVTEEGVEAAAATAVVVVELSSPSTNEEFCCNHPFLFFIRQNKTNSILFYGRFSSP</sequence>
<reference key="1">
    <citation type="journal article" date="1995" name="FEBS Lett.">
        <title>Identification of a novel human serpin gene; cloning sequencing and expression of leupin.</title>
        <authorList>
            <person name="Barnes R.C."/>
            <person name="Worrall D.M."/>
        </authorList>
    </citation>
    <scope>NUCLEOTIDE SEQUENCE [MRNA]</scope>
</reference>
<reference key="2">
    <citation type="journal article" date="1995" name="Proc. Natl. Acad. Sci. U.S.A.">
        <title>A serine proteinase inhibitor locus at 18q21.3 contains a tandem duplication of the human squamous cell carcinoma antigen gene.</title>
        <authorList>
            <person name="Schneider S.S."/>
            <person name="Schick C."/>
            <person name="Fish K.E."/>
            <person name="Miller E."/>
            <person name="Pena J.C."/>
            <person name="Treter S.D."/>
            <person name="Hui S.M."/>
            <person name="Silverman G.A."/>
        </authorList>
    </citation>
    <scope>NUCLEOTIDE SEQUENCE [GENOMIC DNA / MRNA]</scope>
</reference>
<reference key="3">
    <citation type="journal article" date="2001" name="Biochim. Biophys. Acta">
        <title>Molecular cloning of human squamous cell carcinoma antigen 1 gene and characterization of its promoter.</title>
        <authorList>
            <person name="Hamada K."/>
            <person name="Shinomiya H."/>
            <person name="Asano Y."/>
            <person name="Kihana T."/>
            <person name="Iwamoto M."/>
            <person name="Hanakawa Y."/>
            <person name="Hashimoto K."/>
            <person name="Hirose S."/>
            <person name="Kyo S."/>
            <person name="Ito M."/>
        </authorList>
    </citation>
    <scope>NUCLEOTIDE SEQUENCE [GENOMIC DNA]</scope>
</reference>
<reference key="4">
    <citation type="journal article" date="2004" name="Nat. Genet.">
        <title>Complete sequencing and characterization of 21,243 full-length human cDNAs.</title>
        <authorList>
            <person name="Ota T."/>
            <person name="Suzuki Y."/>
            <person name="Nishikawa T."/>
            <person name="Otsuki T."/>
            <person name="Sugiyama T."/>
            <person name="Irie R."/>
            <person name="Wakamatsu A."/>
            <person name="Hayashi K."/>
            <person name="Sato H."/>
            <person name="Nagai K."/>
            <person name="Kimura K."/>
            <person name="Makita H."/>
            <person name="Sekine M."/>
            <person name="Obayashi M."/>
            <person name="Nishi T."/>
            <person name="Shibahara T."/>
            <person name="Tanaka T."/>
            <person name="Ishii S."/>
            <person name="Yamamoto J."/>
            <person name="Saito K."/>
            <person name="Kawai Y."/>
            <person name="Isono Y."/>
            <person name="Nakamura Y."/>
            <person name="Nagahari K."/>
            <person name="Murakami K."/>
            <person name="Yasuda T."/>
            <person name="Iwayanagi T."/>
            <person name="Wagatsuma M."/>
            <person name="Shiratori A."/>
            <person name="Sudo H."/>
            <person name="Hosoiri T."/>
            <person name="Kaku Y."/>
            <person name="Kodaira H."/>
            <person name="Kondo H."/>
            <person name="Sugawara M."/>
            <person name="Takahashi M."/>
            <person name="Kanda K."/>
            <person name="Yokoi T."/>
            <person name="Furuya T."/>
            <person name="Kikkawa E."/>
            <person name="Omura Y."/>
            <person name="Abe K."/>
            <person name="Kamihara K."/>
            <person name="Katsuta N."/>
            <person name="Sato K."/>
            <person name="Tanikawa M."/>
            <person name="Yamazaki M."/>
            <person name="Ninomiya K."/>
            <person name="Ishibashi T."/>
            <person name="Yamashita H."/>
            <person name="Murakawa K."/>
            <person name="Fujimori K."/>
            <person name="Tanai H."/>
            <person name="Kimata M."/>
            <person name="Watanabe M."/>
            <person name="Hiraoka S."/>
            <person name="Chiba Y."/>
            <person name="Ishida S."/>
            <person name="Ono Y."/>
            <person name="Takiguchi S."/>
            <person name="Watanabe S."/>
            <person name="Yosida M."/>
            <person name="Hotuta T."/>
            <person name="Kusano J."/>
            <person name="Kanehori K."/>
            <person name="Takahashi-Fujii A."/>
            <person name="Hara H."/>
            <person name="Tanase T.-O."/>
            <person name="Nomura Y."/>
            <person name="Togiya S."/>
            <person name="Komai F."/>
            <person name="Hara R."/>
            <person name="Takeuchi K."/>
            <person name="Arita M."/>
            <person name="Imose N."/>
            <person name="Musashino K."/>
            <person name="Yuuki H."/>
            <person name="Oshima A."/>
            <person name="Sasaki N."/>
            <person name="Aotsuka S."/>
            <person name="Yoshikawa Y."/>
            <person name="Matsunawa H."/>
            <person name="Ichihara T."/>
            <person name="Shiohata N."/>
            <person name="Sano S."/>
            <person name="Moriya S."/>
            <person name="Momiyama H."/>
            <person name="Satoh N."/>
            <person name="Takami S."/>
            <person name="Terashima Y."/>
            <person name="Suzuki O."/>
            <person name="Nakagawa S."/>
            <person name="Senoh A."/>
            <person name="Mizoguchi H."/>
            <person name="Goto Y."/>
            <person name="Shimizu F."/>
            <person name="Wakebe H."/>
            <person name="Hishigaki H."/>
            <person name="Watanabe T."/>
            <person name="Sugiyama A."/>
            <person name="Takemoto M."/>
            <person name="Kawakami B."/>
            <person name="Yamazaki M."/>
            <person name="Watanabe K."/>
            <person name="Kumagai A."/>
            <person name="Itakura S."/>
            <person name="Fukuzumi Y."/>
            <person name="Fujimori Y."/>
            <person name="Komiyama M."/>
            <person name="Tashiro H."/>
            <person name="Tanigami A."/>
            <person name="Fujiwara T."/>
            <person name="Ono T."/>
            <person name="Yamada K."/>
            <person name="Fujii Y."/>
            <person name="Ozaki K."/>
            <person name="Hirao M."/>
            <person name="Ohmori Y."/>
            <person name="Kawabata A."/>
            <person name="Hikiji T."/>
            <person name="Kobatake N."/>
            <person name="Inagaki H."/>
            <person name="Ikema Y."/>
            <person name="Okamoto S."/>
            <person name="Okitani R."/>
            <person name="Kawakami T."/>
            <person name="Noguchi S."/>
            <person name="Itoh T."/>
            <person name="Shigeta K."/>
            <person name="Senba T."/>
            <person name="Matsumura K."/>
            <person name="Nakajima Y."/>
            <person name="Mizuno T."/>
            <person name="Morinaga M."/>
            <person name="Sasaki M."/>
            <person name="Togashi T."/>
            <person name="Oyama M."/>
            <person name="Hata H."/>
            <person name="Watanabe M."/>
            <person name="Komatsu T."/>
            <person name="Mizushima-Sugano J."/>
            <person name="Satoh T."/>
            <person name="Shirai Y."/>
            <person name="Takahashi Y."/>
            <person name="Nakagawa K."/>
            <person name="Okumura K."/>
            <person name="Nagase T."/>
            <person name="Nomura N."/>
            <person name="Kikuchi H."/>
            <person name="Masuho Y."/>
            <person name="Yamashita R."/>
            <person name="Nakai K."/>
            <person name="Yada T."/>
            <person name="Nakamura Y."/>
            <person name="Ohara O."/>
            <person name="Isogai T."/>
            <person name="Sugano S."/>
        </authorList>
    </citation>
    <scope>NUCLEOTIDE SEQUENCE [LARGE SCALE MRNA]</scope>
    <source>
        <tissue>Esophagus</tissue>
    </source>
</reference>
<reference key="5">
    <citation type="journal article" date="2004" name="Genome Res.">
        <title>The status, quality, and expansion of the NIH full-length cDNA project: the Mammalian Gene Collection (MGC).</title>
        <authorList>
            <consortium name="The MGC Project Team"/>
        </authorList>
    </citation>
    <scope>NUCLEOTIDE SEQUENCE [LARGE SCALE MRNA]</scope>
    <source>
        <tissue>Bone marrow</tissue>
    </source>
</reference>
<reference key="6">
    <citation type="submission" date="2008-02" db="UniProtKB">
        <authorList>
            <person name="Bienvenut W.V."/>
            <person name="Bensaad K."/>
            <person name="Vousden K.H."/>
        </authorList>
    </citation>
    <scope>PROTEIN SEQUENCE OF 1-21; 56-69; 88-94; 147-160; 215-260; 266-276 AND 378-386</scope>
    <scope>ACETYLATION AT MET-1</scope>
    <scope>IDENTIFICATION BY MASS SPECTROMETRY</scope>
    <source>
        <tissue>Osteosarcoma</tissue>
    </source>
</reference>
<reference key="7">
    <citation type="journal article" date="2000" name="Int. J. Cancer">
        <title>Circulating serpin tumor markers SCCA1 and SCCA2 are not actively secreted but reside in the cytosol of squamous carcinoma cells.</title>
        <authorList>
            <person name="Uemura Y."/>
            <person name="Pak S.C."/>
            <person name="Luke C."/>
            <person name="Cataltepe S."/>
            <person name="Tsu C."/>
            <person name="Schick C."/>
            <person name="Kamachi Y."/>
            <person name="Pomeroy S.L."/>
            <person name="Perlmutter D.H."/>
            <person name="Silverman G.A."/>
        </authorList>
    </citation>
    <scope>SUBCELLULAR LOCATION</scope>
</reference>
<proteinExistence type="evidence at protein level"/>